<proteinExistence type="inferred from homology"/>
<organism>
    <name type="scientific">Salmonella schwarzengrund (strain CVM19633)</name>
    <dbReference type="NCBI Taxonomy" id="439843"/>
    <lineage>
        <taxon>Bacteria</taxon>
        <taxon>Pseudomonadati</taxon>
        <taxon>Pseudomonadota</taxon>
        <taxon>Gammaproteobacteria</taxon>
        <taxon>Enterobacterales</taxon>
        <taxon>Enterobacteriaceae</taxon>
        <taxon>Salmonella</taxon>
    </lineage>
</organism>
<comment type="function">
    <text evidence="1">Positively regulates the transcription of the maltose regulon whose gene products are responsible for uptake and catabolism of malto-oligosaccharides. Specifically binds to the promoter region of its target genes, recognizing a short DNA motif called the MalT box.</text>
</comment>
<comment type="activity regulation">
    <text evidence="1">Activated by ATP and maltotriose, which are both required for DNA binding.</text>
</comment>
<comment type="subunit">
    <text evidence="1">Monomer in solution. Oligomerizes to an active state in the presence of the positive effectors ATP and maltotriose.</text>
</comment>
<comment type="similarity">
    <text evidence="1">Belongs to the MalT family.</text>
</comment>
<accession>B4TY75</accession>
<keyword id="KW-0010">Activator</keyword>
<keyword id="KW-0067">ATP-binding</keyword>
<keyword id="KW-0119">Carbohydrate metabolism</keyword>
<keyword id="KW-0238">DNA-binding</keyword>
<keyword id="KW-0547">Nucleotide-binding</keyword>
<keyword id="KW-0804">Transcription</keyword>
<keyword id="KW-0805">Transcription regulation</keyword>
<dbReference type="EMBL" id="CP001127">
    <property type="protein sequence ID" value="ACF91519.1"/>
    <property type="molecule type" value="Genomic_DNA"/>
</dbReference>
<dbReference type="RefSeq" id="WP_000907030.1">
    <property type="nucleotide sequence ID" value="NC_011094.1"/>
</dbReference>
<dbReference type="SMR" id="B4TY75"/>
<dbReference type="KEGG" id="sew:SeSA_A3714"/>
<dbReference type="HOGENOM" id="CLU_006325_3_0_6"/>
<dbReference type="Proteomes" id="UP000001865">
    <property type="component" value="Chromosome"/>
</dbReference>
<dbReference type="GO" id="GO:0005524">
    <property type="term" value="F:ATP binding"/>
    <property type="evidence" value="ECO:0007669"/>
    <property type="project" value="UniProtKB-UniRule"/>
</dbReference>
<dbReference type="GO" id="GO:0003677">
    <property type="term" value="F:DNA binding"/>
    <property type="evidence" value="ECO:0007669"/>
    <property type="project" value="UniProtKB-KW"/>
</dbReference>
<dbReference type="GO" id="GO:0003700">
    <property type="term" value="F:DNA-binding transcription factor activity"/>
    <property type="evidence" value="ECO:0007669"/>
    <property type="project" value="UniProtKB-UniRule"/>
</dbReference>
<dbReference type="GO" id="GO:0045913">
    <property type="term" value="P:positive regulation of carbohydrate metabolic process"/>
    <property type="evidence" value="ECO:0007669"/>
    <property type="project" value="UniProtKB-UniRule"/>
</dbReference>
<dbReference type="GO" id="GO:0045893">
    <property type="term" value="P:positive regulation of DNA-templated transcription"/>
    <property type="evidence" value="ECO:0007669"/>
    <property type="project" value="UniProtKB-UniRule"/>
</dbReference>
<dbReference type="CDD" id="cd06170">
    <property type="entry name" value="LuxR_C_like"/>
    <property type="match status" value="1"/>
</dbReference>
<dbReference type="FunFam" id="1.10.10.10:FF:000115">
    <property type="entry name" value="HTH-type transcriptional regulator MalT"/>
    <property type="match status" value="1"/>
</dbReference>
<dbReference type="Gene3D" id="1.25.40.10">
    <property type="entry name" value="Tetratricopeptide repeat domain"/>
    <property type="match status" value="1"/>
</dbReference>
<dbReference type="Gene3D" id="1.10.10.10">
    <property type="entry name" value="Winged helix-like DNA-binding domain superfamily/Winged helix DNA-binding domain"/>
    <property type="match status" value="1"/>
</dbReference>
<dbReference type="HAMAP" id="MF_01247">
    <property type="entry name" value="HTH_type_MalT"/>
    <property type="match status" value="1"/>
</dbReference>
<dbReference type="InterPro" id="IPR027417">
    <property type="entry name" value="P-loop_NTPase"/>
</dbReference>
<dbReference type="InterPro" id="IPR016032">
    <property type="entry name" value="Sig_transdc_resp-reg_C-effctor"/>
</dbReference>
<dbReference type="InterPro" id="IPR011990">
    <property type="entry name" value="TPR-like_helical_dom_sf"/>
</dbReference>
<dbReference type="InterPro" id="IPR041617">
    <property type="entry name" value="TPR_MalT"/>
</dbReference>
<dbReference type="InterPro" id="IPR023768">
    <property type="entry name" value="Tscrpt_reg_HTH_MalT"/>
</dbReference>
<dbReference type="InterPro" id="IPR000792">
    <property type="entry name" value="Tscrpt_reg_LuxR_C"/>
</dbReference>
<dbReference type="InterPro" id="IPR036388">
    <property type="entry name" value="WH-like_DNA-bd_sf"/>
</dbReference>
<dbReference type="NCBIfam" id="NF003420">
    <property type="entry name" value="PRK04841.1"/>
    <property type="match status" value="1"/>
</dbReference>
<dbReference type="PANTHER" id="PTHR44688">
    <property type="entry name" value="DNA-BINDING TRANSCRIPTIONAL ACTIVATOR DEVR_DOSR"/>
    <property type="match status" value="1"/>
</dbReference>
<dbReference type="PANTHER" id="PTHR44688:SF16">
    <property type="entry name" value="DNA-BINDING TRANSCRIPTIONAL ACTIVATOR DEVR_DOSR"/>
    <property type="match status" value="1"/>
</dbReference>
<dbReference type="Pfam" id="PF00196">
    <property type="entry name" value="GerE"/>
    <property type="match status" value="1"/>
</dbReference>
<dbReference type="Pfam" id="PF17874">
    <property type="entry name" value="TPR_MalT"/>
    <property type="match status" value="1"/>
</dbReference>
<dbReference type="PRINTS" id="PR00038">
    <property type="entry name" value="HTHLUXR"/>
</dbReference>
<dbReference type="SMART" id="SM00421">
    <property type="entry name" value="HTH_LUXR"/>
    <property type="match status" value="1"/>
</dbReference>
<dbReference type="SUPFAM" id="SSF46894">
    <property type="entry name" value="C-terminal effector domain of the bipartite response regulators"/>
    <property type="match status" value="1"/>
</dbReference>
<dbReference type="SUPFAM" id="SSF52540">
    <property type="entry name" value="P-loop containing nucleoside triphosphate hydrolases"/>
    <property type="match status" value="1"/>
</dbReference>
<dbReference type="SUPFAM" id="SSF48452">
    <property type="entry name" value="TPR-like"/>
    <property type="match status" value="1"/>
</dbReference>
<dbReference type="PROSITE" id="PS00622">
    <property type="entry name" value="HTH_LUXR_1"/>
    <property type="match status" value="1"/>
</dbReference>
<dbReference type="PROSITE" id="PS50043">
    <property type="entry name" value="HTH_LUXR_2"/>
    <property type="match status" value="1"/>
</dbReference>
<reference key="1">
    <citation type="journal article" date="2011" name="J. Bacteriol.">
        <title>Comparative genomics of 28 Salmonella enterica isolates: evidence for CRISPR-mediated adaptive sublineage evolution.</title>
        <authorList>
            <person name="Fricke W.F."/>
            <person name="Mammel M.K."/>
            <person name="McDermott P.F."/>
            <person name="Tartera C."/>
            <person name="White D.G."/>
            <person name="Leclerc J.E."/>
            <person name="Ravel J."/>
            <person name="Cebula T.A."/>
        </authorList>
    </citation>
    <scope>NUCLEOTIDE SEQUENCE [LARGE SCALE GENOMIC DNA]</scope>
    <source>
        <strain>CVM19633</strain>
    </source>
</reference>
<feature type="chain" id="PRO_1000139860" description="HTH-type transcriptional regulator MalT">
    <location>
        <begin position="1"/>
        <end position="901"/>
    </location>
</feature>
<feature type="domain" description="HTH luxR-type" evidence="1">
    <location>
        <begin position="829"/>
        <end position="894"/>
    </location>
</feature>
<feature type="DNA-binding region" description="H-T-H motif" evidence="1">
    <location>
        <begin position="853"/>
        <end position="872"/>
    </location>
</feature>
<feature type="binding site" evidence="1">
    <location>
        <begin position="39"/>
        <end position="46"/>
    </location>
    <ligand>
        <name>ATP</name>
        <dbReference type="ChEBI" id="CHEBI:30616"/>
    </ligand>
</feature>
<protein>
    <recommendedName>
        <fullName evidence="1">HTH-type transcriptional regulator MalT</fullName>
    </recommendedName>
    <alternativeName>
        <fullName evidence="1">ATP-dependent transcriptional activator MalT</fullName>
    </alternativeName>
</protein>
<sequence>MLIPSKLSRPVRLDHTVVRERLLAKLSGANNFRLALVTSPAGYGKTTLVSQWAAGKNELGWYSLDEGDNQQERFASYLIAAIQQATGGHCSTSEAMAQKRQYASLTSLFAQLFIELAQWHRPLYLVIDDYHLITNPVIHDAMRFFLRHQPENFTLVVLSRNLPQLGIANLRVRDQLLEIGSQQLAFNHQEAKQFFDRRLSSPIEAAESSRMCDDVAGWATALQLIALSARQNHTSAHHSARRLAGINASHLSDYLVDEVLDNVDVSTRHFLLKSAILRSMNDALIVRVTGEENGQMRLEEIERQGLFLQRMDDTGEWFSYHPLFGSFLRQRCQWELAAELPEIHRAAAESWMEQGFPSEAIHHALAAGDAQMLRDILLNHAWGLFNHSELALLEESLKALPWESLLENPRLVLLQAWLMQSQHRYSEVNTLLARAEQEIKGVMDGTLHAEFNALRAQVAINDGNPEEAERLAKLALDELPLAWFYSRIVATSVHGEVLHCKGDLSQSLSLMQQTEQMARHHDVWHYALWSLIQQSEIQFAQGFLQAAWETQERAFQLIKEQHLEQLPMHEFLVRIRAQLLWAWARLDEAEASARSGIAVLSTFQPQQQLQCLTLLVQCSLARGDLDNARSQLNRLENLLGNGRYHCDWISNADKVRVIYWQLTGDKKSAANWLRHTPKPAFANNHFLQGQWRNIARAQILLGEFEPAEIVLEELNENARSLRLMSDLNRNLLLLNQLYWQSGRKNDAQRVLLDALQLANRTGFISHFVIEGEAMAQQLRQLIQLNTLPEMEQHRAQRILREINQHHRHKFAHFDEGFVERLLNHPDVPELIRTSPLTQREWQVLGLIYSGYSNEQIAGELAVAATTIKTHIRNLYQKLGVAHRQDAVQHAQQLLKMMGYGV</sequence>
<gene>
    <name evidence="1" type="primary">malT</name>
    <name type="ordered locus">SeSA_A3714</name>
</gene>
<evidence type="ECO:0000255" key="1">
    <source>
        <dbReference type="HAMAP-Rule" id="MF_01247"/>
    </source>
</evidence>
<name>MALT_SALSV</name>